<feature type="chain" id="PRO_0000222484" description="Non-structural protein NS3">
    <location>
        <begin position="1"/>
        <end position="202"/>
    </location>
</feature>
<organismHost>
    <name type="scientific">Diatraea saccharalis</name>
    <name type="common">sugarcane borer</name>
    <dbReference type="NCBI Taxonomy" id="40085"/>
</organismHost>
<organism>
    <name type="scientific">Diatraea saccharalis densovirus</name>
    <name type="common">DsDNV</name>
    <dbReference type="NCBI Taxonomy" id="72003"/>
    <lineage>
        <taxon>Viruses</taxon>
        <taxon>Monodnaviria</taxon>
        <taxon>Shotokuvirae</taxon>
        <taxon>Cossaviricota</taxon>
        <taxon>Quintoviricetes</taxon>
        <taxon>Piccovirales</taxon>
        <taxon>Parvoviridae</taxon>
        <taxon>Densovirinae</taxon>
    </lineage>
</organism>
<proteinExistence type="predicted"/>
<gene>
    <name type="primary">NS3</name>
</gene>
<name>VNS3_DSDNV</name>
<sequence>MSLMYGKYNICKRRLFETKTYNPKTLFYLSYKTARLNGLDLSTLPLTIRKLQNKIDKHILWCDEDIENVLGAERLTKWNFNIIQPLPVNVFLALQNLTEIPDWLDETMWVQFKWIYNKSTTFEFDDFQEKFIEHKHYEKICHNCFNRFLDHALQEMSTIEKTIINYIKPFDAGDILNILQDSYHWCEYCHITPLFRLIKIEY</sequence>
<dbReference type="EMBL" id="AF036333">
    <property type="protein sequence ID" value="AAC17998.1"/>
    <property type="molecule type" value="Genomic_DNA"/>
</dbReference>
<dbReference type="RefSeq" id="NP_046812.1">
    <property type="nucleotide sequence ID" value="NC_001899.1"/>
</dbReference>
<dbReference type="KEGG" id="vg:1449607"/>
<dbReference type="OrthoDB" id="26462at10239"/>
<dbReference type="Proteomes" id="UP000007205">
    <property type="component" value="Genome"/>
</dbReference>
<dbReference type="InterPro" id="IPR035222">
    <property type="entry name" value="NS3"/>
</dbReference>
<dbReference type="Pfam" id="PF17530">
    <property type="entry name" value="NS3"/>
    <property type="match status" value="1"/>
</dbReference>
<accession>O71152</accession>
<protein>
    <recommendedName>
        <fullName>Non-structural protein NS3</fullName>
    </recommendedName>
</protein>
<reference key="1">
    <citation type="submission" date="1997-12" db="EMBL/GenBank/DDBJ databases">
        <title>Complete nucleotide sequence and genome organization of an infectious clone of Diatraea saccharalis densovirus (DsDNV).</title>
        <authorList>
            <person name="Boublik Y."/>
            <person name="Kouassi K.N."/>
            <person name="Cavallaro C."/>
            <person name="Bergoin M."/>
        </authorList>
    </citation>
    <scope>NUCLEOTIDE SEQUENCE [GENOMIC DNA]</scope>
</reference>